<dbReference type="EMBL" id="CP000686">
    <property type="protein sequence ID" value="ABQ90870.1"/>
    <property type="molecule type" value="Genomic_DNA"/>
</dbReference>
<dbReference type="RefSeq" id="WP_011957214.1">
    <property type="nucleotide sequence ID" value="NC_009523.1"/>
</dbReference>
<dbReference type="SMR" id="A5UW67"/>
<dbReference type="STRING" id="357808.RoseRS_2493"/>
<dbReference type="KEGG" id="rrs:RoseRS_2493"/>
<dbReference type="eggNOG" id="COG0239">
    <property type="taxonomic scope" value="Bacteria"/>
</dbReference>
<dbReference type="HOGENOM" id="CLU_114342_2_3_0"/>
<dbReference type="OrthoDB" id="9815830at2"/>
<dbReference type="Proteomes" id="UP000006554">
    <property type="component" value="Chromosome"/>
</dbReference>
<dbReference type="GO" id="GO:0005886">
    <property type="term" value="C:plasma membrane"/>
    <property type="evidence" value="ECO:0007669"/>
    <property type="project" value="UniProtKB-SubCell"/>
</dbReference>
<dbReference type="GO" id="GO:0062054">
    <property type="term" value="F:fluoride channel activity"/>
    <property type="evidence" value="ECO:0007669"/>
    <property type="project" value="UniProtKB-UniRule"/>
</dbReference>
<dbReference type="GO" id="GO:0046872">
    <property type="term" value="F:metal ion binding"/>
    <property type="evidence" value="ECO:0007669"/>
    <property type="project" value="UniProtKB-KW"/>
</dbReference>
<dbReference type="GO" id="GO:0140114">
    <property type="term" value="P:cellular detoxification of fluoride"/>
    <property type="evidence" value="ECO:0007669"/>
    <property type="project" value="UniProtKB-UniRule"/>
</dbReference>
<dbReference type="HAMAP" id="MF_00454">
    <property type="entry name" value="FluC"/>
    <property type="match status" value="1"/>
</dbReference>
<dbReference type="InterPro" id="IPR003691">
    <property type="entry name" value="FluC"/>
</dbReference>
<dbReference type="NCBIfam" id="TIGR00494">
    <property type="entry name" value="crcB"/>
    <property type="match status" value="1"/>
</dbReference>
<dbReference type="PANTHER" id="PTHR28259">
    <property type="entry name" value="FLUORIDE EXPORT PROTEIN 1-RELATED"/>
    <property type="match status" value="1"/>
</dbReference>
<dbReference type="PANTHER" id="PTHR28259:SF1">
    <property type="entry name" value="FLUORIDE EXPORT PROTEIN 1-RELATED"/>
    <property type="match status" value="1"/>
</dbReference>
<dbReference type="Pfam" id="PF02537">
    <property type="entry name" value="CRCB"/>
    <property type="match status" value="1"/>
</dbReference>
<evidence type="ECO:0000255" key="1">
    <source>
        <dbReference type="HAMAP-Rule" id="MF_00454"/>
    </source>
</evidence>
<accession>A5UW67</accession>
<keyword id="KW-1003">Cell membrane</keyword>
<keyword id="KW-0407">Ion channel</keyword>
<keyword id="KW-0406">Ion transport</keyword>
<keyword id="KW-0472">Membrane</keyword>
<keyword id="KW-0479">Metal-binding</keyword>
<keyword id="KW-0915">Sodium</keyword>
<keyword id="KW-0812">Transmembrane</keyword>
<keyword id="KW-1133">Transmembrane helix</keyword>
<keyword id="KW-0813">Transport</keyword>
<proteinExistence type="inferred from homology"/>
<feature type="chain" id="PRO_1000081016" description="Fluoride-specific ion channel FluC">
    <location>
        <begin position="1"/>
        <end position="124"/>
    </location>
</feature>
<feature type="transmembrane region" description="Helical" evidence="1">
    <location>
        <begin position="3"/>
        <end position="23"/>
    </location>
</feature>
<feature type="transmembrane region" description="Helical" evidence="1">
    <location>
        <begin position="34"/>
        <end position="54"/>
    </location>
</feature>
<feature type="transmembrane region" description="Helical" evidence="1">
    <location>
        <begin position="66"/>
        <end position="86"/>
    </location>
</feature>
<feature type="transmembrane region" description="Helical" evidence="1">
    <location>
        <begin position="100"/>
        <end position="120"/>
    </location>
</feature>
<feature type="binding site" evidence="1">
    <location>
        <position position="74"/>
    </location>
    <ligand>
        <name>Na(+)</name>
        <dbReference type="ChEBI" id="CHEBI:29101"/>
        <note>structural</note>
    </ligand>
</feature>
<feature type="binding site" evidence="1">
    <location>
        <position position="77"/>
    </location>
    <ligand>
        <name>Na(+)</name>
        <dbReference type="ChEBI" id="CHEBI:29101"/>
        <note>structural</note>
    </ligand>
</feature>
<name>FLUC_ROSS1</name>
<gene>
    <name evidence="1" type="primary">fluC</name>
    <name evidence="1" type="synonym">crcB</name>
    <name type="ordered locus">RoseRS_2493</name>
</gene>
<sequence length="124" mass="12811">MNIIAIAVGAAIGANLRYSLSIWAAQRWGASFPYGTLIVNVIGSFAIGFVLVLATTRLSLSDTARLLIVTGLLGGFTTFSSLSFETYTLVTSGSWMAAGLYVLSSFGLGIAGVFLGAGVARVLP</sequence>
<reference key="1">
    <citation type="submission" date="2007-04" db="EMBL/GenBank/DDBJ databases">
        <title>Complete sequence of Roseiflexus sp. RS-1.</title>
        <authorList>
            <consortium name="US DOE Joint Genome Institute"/>
            <person name="Copeland A."/>
            <person name="Lucas S."/>
            <person name="Lapidus A."/>
            <person name="Barry K."/>
            <person name="Detter J.C."/>
            <person name="Glavina del Rio T."/>
            <person name="Hammon N."/>
            <person name="Israni S."/>
            <person name="Dalin E."/>
            <person name="Tice H."/>
            <person name="Pitluck S."/>
            <person name="Chertkov O."/>
            <person name="Brettin T."/>
            <person name="Bruce D."/>
            <person name="Han C."/>
            <person name="Schmutz J."/>
            <person name="Larimer F."/>
            <person name="Land M."/>
            <person name="Hauser L."/>
            <person name="Kyrpides N."/>
            <person name="Mikhailova N."/>
            <person name="Bryant D.A."/>
            <person name="Richardson P."/>
        </authorList>
    </citation>
    <scope>NUCLEOTIDE SEQUENCE [LARGE SCALE GENOMIC DNA]</scope>
    <source>
        <strain>RS-1</strain>
    </source>
</reference>
<organism>
    <name type="scientific">Roseiflexus sp. (strain RS-1)</name>
    <dbReference type="NCBI Taxonomy" id="357808"/>
    <lineage>
        <taxon>Bacteria</taxon>
        <taxon>Bacillati</taxon>
        <taxon>Chloroflexota</taxon>
        <taxon>Chloroflexia</taxon>
        <taxon>Chloroflexales</taxon>
        <taxon>Roseiflexineae</taxon>
        <taxon>Roseiflexaceae</taxon>
        <taxon>Roseiflexus</taxon>
    </lineage>
</organism>
<protein>
    <recommendedName>
        <fullName evidence="1">Fluoride-specific ion channel FluC</fullName>
    </recommendedName>
</protein>
<comment type="function">
    <text evidence="1">Fluoride-specific ion channel. Important for reducing fluoride concentration in the cell, thus reducing its toxicity.</text>
</comment>
<comment type="catalytic activity">
    <reaction evidence="1">
        <text>fluoride(in) = fluoride(out)</text>
        <dbReference type="Rhea" id="RHEA:76159"/>
        <dbReference type="ChEBI" id="CHEBI:17051"/>
    </reaction>
    <physiologicalReaction direction="left-to-right" evidence="1">
        <dbReference type="Rhea" id="RHEA:76160"/>
    </physiologicalReaction>
</comment>
<comment type="activity regulation">
    <text evidence="1">Na(+) is not transported, but it plays an essential structural role and its presence is essential for fluoride channel function.</text>
</comment>
<comment type="subcellular location">
    <subcellularLocation>
        <location evidence="1">Cell membrane</location>
        <topology evidence="1">Multi-pass membrane protein</topology>
    </subcellularLocation>
</comment>
<comment type="similarity">
    <text evidence="1">Belongs to the fluoride channel Fluc/FEX (TC 1.A.43) family.</text>
</comment>